<reference key="1">
    <citation type="journal article" date="2006" name="Mol. Genet. Genomics">
        <title>The chloroplast genome of Nicotiana sylvestris and Nicotiana tomentosiformis: complete sequencing confirms that the Nicotiana sylvestris progenitor is the maternal genome donor of Nicotiana tabacum.</title>
        <authorList>
            <person name="Yukawa M."/>
            <person name="Tsudzuki T."/>
            <person name="Sugiura M."/>
        </authorList>
    </citation>
    <scope>NUCLEOTIDE SEQUENCE [LARGE SCALE GENOMIC DNA]</scope>
</reference>
<keyword id="KW-0150">Chloroplast</keyword>
<keyword id="KW-0472">Membrane</keyword>
<keyword id="KW-0520">NAD</keyword>
<keyword id="KW-0521">NADP</keyword>
<keyword id="KW-0934">Plastid</keyword>
<keyword id="KW-0618">Plastoquinone</keyword>
<keyword id="KW-0874">Quinone</keyword>
<keyword id="KW-1185">Reference proteome</keyword>
<keyword id="KW-0793">Thylakoid</keyword>
<keyword id="KW-1278">Translocase</keyword>
<keyword id="KW-0812">Transmembrane</keyword>
<keyword id="KW-1133">Transmembrane helix</keyword>
<keyword id="KW-0813">Transport</keyword>
<dbReference type="EC" id="7.1.1.-" evidence="1"/>
<dbReference type="EMBL" id="AB237912">
    <property type="protein sequence ID" value="BAE46656.1"/>
    <property type="molecule type" value="Genomic_DNA"/>
</dbReference>
<dbReference type="RefSeq" id="YP_358681.1">
    <property type="nucleotide sequence ID" value="NC_007500.1"/>
</dbReference>
<dbReference type="SMR" id="Q3C1J7"/>
<dbReference type="GeneID" id="3735061"/>
<dbReference type="KEGG" id="nsy:3735061"/>
<dbReference type="OrthoDB" id="24102at4085"/>
<dbReference type="Proteomes" id="UP000189701">
    <property type="component" value="Chloroplast Pltd"/>
</dbReference>
<dbReference type="GO" id="GO:0009535">
    <property type="term" value="C:chloroplast thylakoid membrane"/>
    <property type="evidence" value="ECO:0007669"/>
    <property type="project" value="UniProtKB-SubCell"/>
</dbReference>
<dbReference type="GO" id="GO:0030964">
    <property type="term" value="C:NADH dehydrogenase complex"/>
    <property type="evidence" value="ECO:0007669"/>
    <property type="project" value="TreeGrafter"/>
</dbReference>
<dbReference type="GO" id="GO:0008137">
    <property type="term" value="F:NADH dehydrogenase (ubiquinone) activity"/>
    <property type="evidence" value="ECO:0007669"/>
    <property type="project" value="InterPro"/>
</dbReference>
<dbReference type="GO" id="GO:0048038">
    <property type="term" value="F:quinone binding"/>
    <property type="evidence" value="ECO:0007669"/>
    <property type="project" value="UniProtKB-KW"/>
</dbReference>
<dbReference type="GO" id="GO:0019684">
    <property type="term" value="P:photosynthesis, light reaction"/>
    <property type="evidence" value="ECO:0007669"/>
    <property type="project" value="UniProtKB-UniRule"/>
</dbReference>
<dbReference type="FunFam" id="1.20.58.1610:FF:000001">
    <property type="entry name" value="NAD(P)H-quinone oxidoreductase subunit 3, chloroplastic"/>
    <property type="match status" value="1"/>
</dbReference>
<dbReference type="Gene3D" id="1.20.58.1610">
    <property type="entry name" value="NADH:ubiquinone/plastoquinone oxidoreductase, chain 3"/>
    <property type="match status" value="1"/>
</dbReference>
<dbReference type="HAMAP" id="MF_01394">
    <property type="entry name" value="NDH1_NuoA"/>
    <property type="match status" value="1"/>
</dbReference>
<dbReference type="InterPro" id="IPR023043">
    <property type="entry name" value="NAD(P)H_OxRDtase_bac/plastid"/>
</dbReference>
<dbReference type="InterPro" id="IPR000440">
    <property type="entry name" value="NADH_UbQ/plastoQ_OxRdtase_su3"/>
</dbReference>
<dbReference type="InterPro" id="IPR038430">
    <property type="entry name" value="NDAH_ubi_oxred_su3_sf"/>
</dbReference>
<dbReference type="PANTHER" id="PTHR11058">
    <property type="entry name" value="NADH-UBIQUINONE OXIDOREDUCTASE CHAIN 3"/>
    <property type="match status" value="1"/>
</dbReference>
<dbReference type="PANTHER" id="PTHR11058:SF9">
    <property type="entry name" value="NADH-UBIQUINONE OXIDOREDUCTASE CHAIN 3"/>
    <property type="match status" value="1"/>
</dbReference>
<dbReference type="Pfam" id="PF00507">
    <property type="entry name" value="Oxidored_q4"/>
    <property type="match status" value="1"/>
</dbReference>
<gene>
    <name evidence="1" type="primary">ndhC</name>
</gene>
<evidence type="ECO:0000255" key="1">
    <source>
        <dbReference type="HAMAP-Rule" id="MF_01394"/>
    </source>
</evidence>
<geneLocation type="chloroplast"/>
<name>NU3C_NICSY</name>
<proteinExistence type="inferred from homology"/>
<feature type="chain" id="PRO_0000362853" description="NAD(P)H-quinone oxidoreductase subunit 3, chloroplastic">
    <location>
        <begin position="1"/>
        <end position="120"/>
    </location>
</feature>
<feature type="transmembrane region" description="Helical" evidence="1">
    <location>
        <begin position="9"/>
        <end position="29"/>
    </location>
</feature>
<feature type="transmembrane region" description="Helical" evidence="1">
    <location>
        <begin position="64"/>
        <end position="84"/>
    </location>
</feature>
<feature type="transmembrane region" description="Helical" evidence="1">
    <location>
        <begin position="88"/>
        <end position="108"/>
    </location>
</feature>
<protein>
    <recommendedName>
        <fullName evidence="1">NAD(P)H-quinone oxidoreductase subunit 3, chloroplastic</fullName>
        <ecNumber evidence="1">7.1.1.-</ecNumber>
    </recommendedName>
    <alternativeName>
        <fullName evidence="1">NAD(P)H dehydrogenase subunit 3</fullName>
    </alternativeName>
    <alternativeName>
        <fullName evidence="1">NADH-plastoquinone oxidoreductase subunit 3</fullName>
    </alternativeName>
</protein>
<accession>Q3C1J7</accession>
<sequence length="120" mass="13917">MFLLYEYDFFWAFLIISILVPILAFLISGVLAPISKGPEKLSTYESGIEPMGDAWLQFRIRYYMFALVFVVFDVETVFLYPWAMSFDVLGVSVFIEAFIFVLILIIGLVYAWRKGALEWS</sequence>
<organism>
    <name type="scientific">Nicotiana sylvestris</name>
    <name type="common">Wood tobacco</name>
    <name type="synonym">South American tobacco</name>
    <dbReference type="NCBI Taxonomy" id="4096"/>
    <lineage>
        <taxon>Eukaryota</taxon>
        <taxon>Viridiplantae</taxon>
        <taxon>Streptophyta</taxon>
        <taxon>Embryophyta</taxon>
        <taxon>Tracheophyta</taxon>
        <taxon>Spermatophyta</taxon>
        <taxon>Magnoliopsida</taxon>
        <taxon>eudicotyledons</taxon>
        <taxon>Gunneridae</taxon>
        <taxon>Pentapetalae</taxon>
        <taxon>asterids</taxon>
        <taxon>lamiids</taxon>
        <taxon>Solanales</taxon>
        <taxon>Solanaceae</taxon>
        <taxon>Nicotianoideae</taxon>
        <taxon>Nicotianeae</taxon>
        <taxon>Nicotiana</taxon>
    </lineage>
</organism>
<comment type="function">
    <text evidence="1">NDH shuttles electrons from NAD(P)H:plastoquinone, via FMN and iron-sulfur (Fe-S) centers, to quinones in the photosynthetic chain and possibly in a chloroplast respiratory chain. The immediate electron acceptor for the enzyme in this species is believed to be plastoquinone. Couples the redox reaction to proton translocation, and thus conserves the redox energy in a proton gradient.</text>
</comment>
<comment type="catalytic activity">
    <reaction evidence="1">
        <text>a plastoquinone + NADH + (n+1) H(+)(in) = a plastoquinol + NAD(+) + n H(+)(out)</text>
        <dbReference type="Rhea" id="RHEA:42608"/>
        <dbReference type="Rhea" id="RHEA-COMP:9561"/>
        <dbReference type="Rhea" id="RHEA-COMP:9562"/>
        <dbReference type="ChEBI" id="CHEBI:15378"/>
        <dbReference type="ChEBI" id="CHEBI:17757"/>
        <dbReference type="ChEBI" id="CHEBI:57540"/>
        <dbReference type="ChEBI" id="CHEBI:57945"/>
        <dbReference type="ChEBI" id="CHEBI:62192"/>
    </reaction>
</comment>
<comment type="catalytic activity">
    <reaction evidence="1">
        <text>a plastoquinone + NADPH + (n+1) H(+)(in) = a plastoquinol + NADP(+) + n H(+)(out)</text>
        <dbReference type="Rhea" id="RHEA:42612"/>
        <dbReference type="Rhea" id="RHEA-COMP:9561"/>
        <dbReference type="Rhea" id="RHEA-COMP:9562"/>
        <dbReference type="ChEBI" id="CHEBI:15378"/>
        <dbReference type="ChEBI" id="CHEBI:17757"/>
        <dbReference type="ChEBI" id="CHEBI:57783"/>
        <dbReference type="ChEBI" id="CHEBI:58349"/>
        <dbReference type="ChEBI" id="CHEBI:62192"/>
    </reaction>
</comment>
<comment type="subunit">
    <text evidence="1">NDH is composed of at least 16 different subunits, 5 of which are encoded in the nucleus.</text>
</comment>
<comment type="subcellular location">
    <subcellularLocation>
        <location evidence="1">Plastid</location>
        <location evidence="1">Chloroplast thylakoid membrane</location>
        <topology evidence="1">Multi-pass membrane protein</topology>
    </subcellularLocation>
</comment>
<comment type="similarity">
    <text evidence="1">Belongs to the complex I subunit 3 family.</text>
</comment>